<comment type="catalytic activity">
    <reaction>
        <text>a 2,3-saturated acyl-CoA + A = a 2,3-dehydroacyl-CoA + AH2</text>
        <dbReference type="Rhea" id="RHEA:48608"/>
        <dbReference type="ChEBI" id="CHEBI:13193"/>
        <dbReference type="ChEBI" id="CHEBI:17499"/>
        <dbReference type="ChEBI" id="CHEBI:60015"/>
        <dbReference type="ChEBI" id="CHEBI:65111"/>
    </reaction>
</comment>
<comment type="cofactor">
    <cofactor evidence="1">
        <name>FAD</name>
        <dbReference type="ChEBI" id="CHEBI:57692"/>
    </cofactor>
</comment>
<comment type="similarity">
    <text evidence="2">Belongs to the acyl-CoA dehydrogenase family.</text>
</comment>
<protein>
    <recommendedName>
        <fullName>Probable acyl-CoA dehydrogenase YdiO</fullName>
        <ecNumber>1.3.-.-</ecNumber>
    </recommendedName>
</protein>
<accession>P0A9U8</accession>
<accession>P76200</accession>
<accession>P76897</accession>
<accession>Q8X5X5</accession>
<evidence type="ECO:0000250" key="1"/>
<evidence type="ECO:0000305" key="2"/>
<organism>
    <name type="scientific">Escherichia coli (strain K12)</name>
    <dbReference type="NCBI Taxonomy" id="83333"/>
    <lineage>
        <taxon>Bacteria</taxon>
        <taxon>Pseudomonadati</taxon>
        <taxon>Pseudomonadota</taxon>
        <taxon>Gammaproteobacteria</taxon>
        <taxon>Enterobacterales</taxon>
        <taxon>Enterobacteriaceae</taxon>
        <taxon>Escherichia</taxon>
    </lineage>
</organism>
<sequence>MDFSLTEEQELLLASIRELITTNFPEEYFRTCDQNGTYPREFMRALADNGISMLGVPEEFGGIPADYVTQMLALMEVSKCGAPAFLITNGQCIHSMRRFGSAEQLRKTAESTLETGDPAYALALTEPGAGSDNNSATTTYTRKNGKVYINGQKTFITGAKEYPYMLVLARDPQPKDPKKAFTLWWVDSSKPGIKINPLHKIGWHMLSTCEVYLDNVEVEESDMVGEEGMGFLNVMYNFEMERLINAARSTGFAECAFEDAARYANQRIAFGKPIGHNQMIQEKLALMAIKIDNMRNMVLKVAWQADQHQSLRTSAALAKLYCARTAMEVIDDAIQIMGGLGYTDEARVSRFWRDVRCERIGGGTDEIMIYVAGRQILKDYQNK</sequence>
<gene>
    <name type="primary">ydiO</name>
    <name type="ordered locus">b1695</name>
    <name type="ordered locus">JW5275</name>
</gene>
<keyword id="KW-0274">FAD</keyword>
<keyword id="KW-0285">Flavoprotein</keyword>
<keyword id="KW-0560">Oxidoreductase</keyword>
<keyword id="KW-1185">Reference proteome</keyword>
<proteinExistence type="inferred from homology"/>
<name>YDIO_ECOLI</name>
<feature type="chain" id="PRO_0000201206" description="Probable acyl-CoA dehydrogenase YdiO">
    <location>
        <begin position="1"/>
        <end position="383"/>
    </location>
</feature>
<reference key="1">
    <citation type="journal article" date="1997" name="Science">
        <title>The complete genome sequence of Escherichia coli K-12.</title>
        <authorList>
            <person name="Blattner F.R."/>
            <person name="Plunkett G. III"/>
            <person name="Bloch C.A."/>
            <person name="Perna N.T."/>
            <person name="Burland V."/>
            <person name="Riley M."/>
            <person name="Collado-Vides J."/>
            <person name="Glasner J.D."/>
            <person name="Rode C.K."/>
            <person name="Mayhew G.F."/>
            <person name="Gregor J."/>
            <person name="Davis N.W."/>
            <person name="Kirkpatrick H.A."/>
            <person name="Goeden M.A."/>
            <person name="Rose D.J."/>
            <person name="Mau B."/>
            <person name="Shao Y."/>
        </authorList>
    </citation>
    <scope>NUCLEOTIDE SEQUENCE [LARGE SCALE GENOMIC DNA]</scope>
    <source>
        <strain>K12 / MG1655 / ATCC 47076</strain>
    </source>
</reference>
<reference key="2">
    <citation type="journal article" date="2006" name="Mol. Syst. Biol.">
        <title>Highly accurate genome sequences of Escherichia coli K-12 strains MG1655 and W3110.</title>
        <authorList>
            <person name="Hayashi K."/>
            <person name="Morooka N."/>
            <person name="Yamamoto Y."/>
            <person name="Fujita K."/>
            <person name="Isono K."/>
            <person name="Choi S."/>
            <person name="Ohtsubo E."/>
            <person name="Baba T."/>
            <person name="Wanner B.L."/>
            <person name="Mori H."/>
            <person name="Horiuchi T."/>
        </authorList>
    </citation>
    <scope>NUCLEOTIDE SEQUENCE [LARGE SCALE GENOMIC DNA]</scope>
    <source>
        <strain>K12 / W3110 / ATCC 27325 / DSM 5911</strain>
    </source>
</reference>
<reference key="3">
    <citation type="journal article" date="1996" name="DNA Res.">
        <title>A 570-kb DNA sequence of the Escherichia coli K-12 genome corresponding to the 28.0-40.1 min region on the linkage map.</title>
        <authorList>
            <person name="Aiba H."/>
            <person name="Baba T."/>
            <person name="Fujita K."/>
            <person name="Hayashi K."/>
            <person name="Inada T."/>
            <person name="Isono K."/>
            <person name="Itoh T."/>
            <person name="Kasai H."/>
            <person name="Kashimoto K."/>
            <person name="Kimura S."/>
            <person name="Kitakawa M."/>
            <person name="Kitagawa M."/>
            <person name="Makino K."/>
            <person name="Miki T."/>
            <person name="Mizobuchi K."/>
            <person name="Mori H."/>
            <person name="Mori T."/>
            <person name="Motomura K."/>
            <person name="Nakade S."/>
            <person name="Nakamura Y."/>
            <person name="Nashimoto H."/>
            <person name="Nishio Y."/>
            <person name="Oshima T."/>
            <person name="Saito N."/>
            <person name="Sampei G."/>
            <person name="Seki Y."/>
            <person name="Sivasundaram S."/>
            <person name="Tagami H."/>
            <person name="Takeda J."/>
            <person name="Takemoto K."/>
            <person name="Takeuchi Y."/>
            <person name="Wada C."/>
            <person name="Yamamoto Y."/>
            <person name="Horiuchi T."/>
        </authorList>
    </citation>
    <scope>NUCLEOTIDE SEQUENCE [LARGE SCALE GENOMIC DNA] OF 1-117</scope>
    <source>
        <strain>K12 / W3110 / ATCC 27325 / DSM 5911</strain>
    </source>
</reference>
<dbReference type="EC" id="1.3.-.-"/>
<dbReference type="EMBL" id="U00096">
    <property type="protein sequence ID" value="AAC74765.2"/>
    <property type="molecule type" value="Genomic_DNA"/>
</dbReference>
<dbReference type="EMBL" id="AP009048">
    <property type="protein sequence ID" value="BAA15464.2"/>
    <property type="molecule type" value="Genomic_DNA"/>
</dbReference>
<dbReference type="PIR" id="G64927">
    <property type="entry name" value="G64927"/>
</dbReference>
<dbReference type="RefSeq" id="NP_416210.4">
    <property type="nucleotide sequence ID" value="NC_000913.3"/>
</dbReference>
<dbReference type="RefSeq" id="WP_000347850.1">
    <property type="nucleotide sequence ID" value="NZ_STEB01000003.1"/>
</dbReference>
<dbReference type="SMR" id="P0A9U8"/>
<dbReference type="BioGRID" id="4260291">
    <property type="interactions" value="263"/>
</dbReference>
<dbReference type="FunCoup" id="P0A9U8">
    <property type="interactions" value="663"/>
</dbReference>
<dbReference type="STRING" id="511145.b1695"/>
<dbReference type="PaxDb" id="511145-b1695"/>
<dbReference type="EnsemblBacteria" id="AAC74765">
    <property type="protein sequence ID" value="AAC74765"/>
    <property type="gene ID" value="b1695"/>
</dbReference>
<dbReference type="GeneID" id="945626"/>
<dbReference type="KEGG" id="ecj:JW5275"/>
<dbReference type="KEGG" id="eco:b1695"/>
<dbReference type="KEGG" id="ecoc:C3026_09705"/>
<dbReference type="PATRIC" id="fig|1411691.4.peg.563"/>
<dbReference type="EchoBASE" id="EB3731"/>
<dbReference type="eggNOG" id="COG1960">
    <property type="taxonomic scope" value="Bacteria"/>
</dbReference>
<dbReference type="HOGENOM" id="CLU_018204_0_2_6"/>
<dbReference type="InParanoid" id="P0A9U8"/>
<dbReference type="OMA" id="CFITNSG"/>
<dbReference type="OrthoDB" id="9769473at2"/>
<dbReference type="PhylomeDB" id="P0A9U8"/>
<dbReference type="BioCyc" id="EcoCyc:G6918-MONOMER"/>
<dbReference type="PRO" id="PR:P0A9U8"/>
<dbReference type="Proteomes" id="UP000000625">
    <property type="component" value="Chromosome"/>
</dbReference>
<dbReference type="GO" id="GO:0005737">
    <property type="term" value="C:cytoplasm"/>
    <property type="evidence" value="ECO:0000318"/>
    <property type="project" value="GO_Central"/>
</dbReference>
<dbReference type="GO" id="GO:0003995">
    <property type="term" value="F:acyl-CoA dehydrogenase activity"/>
    <property type="evidence" value="ECO:0000318"/>
    <property type="project" value="GO_Central"/>
</dbReference>
<dbReference type="GO" id="GO:0050660">
    <property type="term" value="F:flavin adenine dinucleotide binding"/>
    <property type="evidence" value="ECO:0007669"/>
    <property type="project" value="InterPro"/>
</dbReference>
<dbReference type="GO" id="GO:0071271">
    <property type="term" value="P:1-butanol biosynthetic process"/>
    <property type="evidence" value="ECO:0000315"/>
    <property type="project" value="CACAO"/>
</dbReference>
<dbReference type="GO" id="GO:0033539">
    <property type="term" value="P:fatty acid beta-oxidation using acyl-CoA dehydrogenase"/>
    <property type="evidence" value="ECO:0000318"/>
    <property type="project" value="GO_Central"/>
</dbReference>
<dbReference type="CDD" id="cd00567">
    <property type="entry name" value="ACAD"/>
    <property type="match status" value="1"/>
</dbReference>
<dbReference type="FunFam" id="1.20.140.10:FF:000001">
    <property type="entry name" value="Acyl-CoA dehydrogenase"/>
    <property type="match status" value="1"/>
</dbReference>
<dbReference type="FunFam" id="2.40.110.10:FF:000002">
    <property type="entry name" value="Acyl-CoA dehydrogenase fadE12"/>
    <property type="match status" value="1"/>
</dbReference>
<dbReference type="FunFam" id="1.10.540.10:FF:000011">
    <property type="entry name" value="Predicted acyl-CoA dehydrogenase"/>
    <property type="match status" value="1"/>
</dbReference>
<dbReference type="Gene3D" id="1.10.540.10">
    <property type="entry name" value="Acyl-CoA dehydrogenase/oxidase, N-terminal domain"/>
    <property type="match status" value="1"/>
</dbReference>
<dbReference type="Gene3D" id="2.40.110.10">
    <property type="entry name" value="Butyryl-CoA Dehydrogenase, subunit A, domain 2"/>
    <property type="match status" value="1"/>
</dbReference>
<dbReference type="Gene3D" id="1.20.140.10">
    <property type="entry name" value="Butyryl-CoA Dehydrogenase, subunit A, domain 3"/>
    <property type="match status" value="1"/>
</dbReference>
<dbReference type="InterPro" id="IPR006089">
    <property type="entry name" value="Acyl-CoA_DH_CS"/>
</dbReference>
<dbReference type="InterPro" id="IPR006091">
    <property type="entry name" value="Acyl-CoA_Oxase/DH_mid-dom"/>
</dbReference>
<dbReference type="InterPro" id="IPR046373">
    <property type="entry name" value="Acyl-CoA_Oxase/DH_mid-dom_sf"/>
</dbReference>
<dbReference type="InterPro" id="IPR036250">
    <property type="entry name" value="AcylCo_DH-like_C"/>
</dbReference>
<dbReference type="InterPro" id="IPR009075">
    <property type="entry name" value="AcylCo_DH/oxidase_C"/>
</dbReference>
<dbReference type="InterPro" id="IPR013786">
    <property type="entry name" value="AcylCoA_DH/ox_N"/>
</dbReference>
<dbReference type="InterPro" id="IPR037069">
    <property type="entry name" value="AcylCoA_DH/ox_N_sf"/>
</dbReference>
<dbReference type="InterPro" id="IPR009100">
    <property type="entry name" value="AcylCoA_DH/oxidase_NM_dom_sf"/>
</dbReference>
<dbReference type="NCBIfam" id="NF008997">
    <property type="entry name" value="PRK12341.1"/>
    <property type="match status" value="1"/>
</dbReference>
<dbReference type="PANTHER" id="PTHR43884">
    <property type="entry name" value="ACYL-COA DEHYDROGENASE"/>
    <property type="match status" value="1"/>
</dbReference>
<dbReference type="PANTHER" id="PTHR43884:SF37">
    <property type="entry name" value="ACYL-COA DEHYDROGENASE"/>
    <property type="match status" value="1"/>
</dbReference>
<dbReference type="Pfam" id="PF00441">
    <property type="entry name" value="Acyl-CoA_dh_1"/>
    <property type="match status" value="1"/>
</dbReference>
<dbReference type="Pfam" id="PF02770">
    <property type="entry name" value="Acyl-CoA_dh_M"/>
    <property type="match status" value="1"/>
</dbReference>
<dbReference type="Pfam" id="PF02771">
    <property type="entry name" value="Acyl-CoA_dh_N"/>
    <property type="match status" value="1"/>
</dbReference>
<dbReference type="PIRSF" id="PIRSF016578">
    <property type="entry name" value="HsaA"/>
    <property type="match status" value="1"/>
</dbReference>
<dbReference type="SUPFAM" id="SSF47203">
    <property type="entry name" value="Acyl-CoA dehydrogenase C-terminal domain-like"/>
    <property type="match status" value="1"/>
</dbReference>
<dbReference type="SUPFAM" id="SSF56645">
    <property type="entry name" value="Acyl-CoA dehydrogenase NM domain-like"/>
    <property type="match status" value="1"/>
</dbReference>
<dbReference type="PROSITE" id="PS00072">
    <property type="entry name" value="ACYL_COA_DH_1"/>
    <property type="match status" value="1"/>
</dbReference>
<dbReference type="PROSITE" id="PS00073">
    <property type="entry name" value="ACYL_COA_DH_2"/>
    <property type="match status" value="1"/>
</dbReference>